<proteinExistence type="predicted"/>
<evidence type="ECO:0000256" key="1">
    <source>
        <dbReference type="SAM" id="MobiDB-lite"/>
    </source>
</evidence>
<evidence type="ECO:0000305" key="2"/>
<reference key="1">
    <citation type="journal article" date="1993" name="Infect. Immun.">
        <title>Molecular characterization of a protective outer membrane lipoprotein (OmlA) from Actinobacillus pleuropneumoniae serotype 1.</title>
        <authorList>
            <person name="Gerlach G.-F."/>
            <person name="Anderson C."/>
            <person name="Klashinsky S."/>
            <person name="Rossi-Campos A."/>
            <person name="Potter A.A."/>
            <person name="Willson P.J."/>
        </authorList>
    </citation>
    <scope>NUCLEOTIDE SEQUENCE [GENOMIC DNA]</scope>
    <source>
        <strain>Serotype 1 / Isolate AP37</strain>
    </source>
</reference>
<sequence>MNIATKLMASLVASVVLTACSGGGSSGSSSKPNSELTPKVDMSAPKAEQPKKEEVPQADNSKAEEPKEMAPQVDSPKAEEPKNMAPQMGNPKLNDPQVMAPKMDNPQKDAPKGEELSKDKSNAEILKELGVKDINSGIINNADVVLNLKIDEKDHITVVLDKGKINRNHLKVTNTISAQDIKTLKDSSGKLLGYYGYMQLNQVRQDENYSDEKVSLNEYYLLSMNDADKIRPTKSISYKGDMFYSYKDVGNQKLKASVEASYDDVTKKVSMKVFGENNDYWKLGEFGRTNLLENQVTGAKVGEDGTIINGTLYSKIDNFPLKLTPDANFSGGIFGKNGEVLAGSAISEKWQGVIGATATTKEDKK</sequence>
<organism>
    <name type="scientific">Actinobacillus pleuropneumoniae</name>
    <name type="common">Haemophilus pleuropneumoniae</name>
    <dbReference type="NCBI Taxonomy" id="715"/>
    <lineage>
        <taxon>Bacteria</taxon>
        <taxon>Pseudomonadati</taxon>
        <taxon>Pseudomonadota</taxon>
        <taxon>Gammaproteobacteria</taxon>
        <taxon>Pasteurellales</taxon>
        <taxon>Pasteurellaceae</taxon>
        <taxon>Actinobacillus</taxon>
    </lineage>
</organism>
<name>OMLA_ACTPL</name>
<keyword id="KW-0998">Cell outer membrane</keyword>
<keyword id="KW-0449">Lipoprotein</keyword>
<keyword id="KW-0472">Membrane</keyword>
<keyword id="KW-0564">Palmitate</keyword>
<keyword id="KW-0732">Signal</keyword>
<dbReference type="EMBL" id="L06318">
    <property type="protein sequence ID" value="AAC41456.1"/>
    <property type="molecule type" value="Genomic_DNA"/>
</dbReference>
<dbReference type="PIR" id="A49235">
    <property type="entry name" value="A49235"/>
</dbReference>
<dbReference type="GO" id="GO:0009279">
    <property type="term" value="C:cell outer membrane"/>
    <property type="evidence" value="ECO:0007669"/>
    <property type="project" value="UniProtKB-SubCell"/>
</dbReference>
<dbReference type="Gene3D" id="2.40.160.90">
    <property type="match status" value="1"/>
</dbReference>
<dbReference type="InterPro" id="IPR011250">
    <property type="entry name" value="OMP/PagP_b-brl"/>
</dbReference>
<dbReference type="SUPFAM" id="SSF56925">
    <property type="entry name" value="OMPA-like"/>
    <property type="match status" value="1"/>
</dbReference>
<dbReference type="PROSITE" id="PS51257">
    <property type="entry name" value="PROKAR_LIPOPROTEIN"/>
    <property type="match status" value="1"/>
</dbReference>
<comment type="subcellular location">
    <subcellularLocation>
        <location>Cell outer membrane</location>
        <topology>Lipid-anchor</topology>
    </subcellularLocation>
</comment>
<accession>Q02937</accession>
<gene>
    <name type="primary">omlA</name>
</gene>
<protein>
    <recommendedName>
        <fullName>Outer membrane lipoprotein A</fullName>
    </recommendedName>
</protein>
<feature type="signal peptide">
    <location>
        <begin position="1"/>
        <end position="19"/>
    </location>
</feature>
<feature type="chain" id="PRO_0000018072" description="Outer membrane lipoprotein A">
    <location>
        <begin position="20"/>
        <end position="365"/>
    </location>
</feature>
<feature type="region of interest" description="Disordered" evidence="1">
    <location>
        <begin position="19"/>
        <end position="121"/>
    </location>
</feature>
<feature type="compositionally biased region" description="Basic and acidic residues" evidence="1">
    <location>
        <begin position="48"/>
        <end position="68"/>
    </location>
</feature>
<feature type="compositionally biased region" description="Basic and acidic residues" evidence="1">
    <location>
        <begin position="105"/>
        <end position="121"/>
    </location>
</feature>
<feature type="lipid moiety-binding region" description="N-palmitoyl cysteine" evidence="2">
    <location>
        <position position="20"/>
    </location>
</feature>
<feature type="lipid moiety-binding region" description="S-diacylglycerol cysteine" evidence="2">
    <location>
        <position position="20"/>
    </location>
</feature>